<keyword id="KW-0256">Endoplasmic reticulum</keyword>
<keyword id="KW-0931">ER-Golgi transport</keyword>
<keyword id="KW-0333">Golgi apparatus</keyword>
<keyword id="KW-0472">Membrane</keyword>
<keyword id="KW-1185">Reference proteome</keyword>
<keyword id="KW-0812">Transmembrane</keyword>
<keyword id="KW-1133">Transmembrane helix</keyword>
<keyword id="KW-0813">Transport</keyword>
<proteinExistence type="inferred from homology"/>
<accession>P0CB63</accession>
<accession>A0A1D8PEQ1</accession>
<accession>Q5APC6</accession>
<name>GET2_CANAL</name>
<sequence>MSEPVVDTAELSAEEKKRLLRERRQAKMSKGKATARLNDILSQGSSVKTSGVKSVLDQEKEATPSHDEDPEIQDITEITTPPPRTPPIGEDAPQDIDKIFQSMLQQQGQGADTAGDPFAQIMKMFNQVEGGDSPPSESATSTQDPAELKYRQELLEYNTYNQKLWKFRFLLVRVSVTLFNFFYHYINLSNFHASNYAYVRDLSSEKYPVRDFFTWFATTEVVLVAAYYSIFHSLGLFHAANQNSFVLKAMSMGSMVLPQLEHYKPLVARFLGYYELLGIVLGDLSLVIVLFGLLSFAN</sequence>
<dbReference type="EMBL" id="CP017623">
    <property type="protein sequence ID" value="AOW26607.1"/>
    <property type="molecule type" value="Genomic_DNA"/>
</dbReference>
<dbReference type="RefSeq" id="XP_723525.1">
    <property type="nucleotide sequence ID" value="XM_718432.1"/>
</dbReference>
<dbReference type="SMR" id="P0CB63"/>
<dbReference type="FunCoup" id="P0CB63">
    <property type="interactions" value="66"/>
</dbReference>
<dbReference type="STRING" id="237561.P0CB63"/>
<dbReference type="EnsemblFungi" id="C1_09750W_A-T">
    <property type="protein sequence ID" value="C1_09750W_A-T-p1"/>
    <property type="gene ID" value="C1_09750W_A"/>
</dbReference>
<dbReference type="GeneID" id="3634822"/>
<dbReference type="KEGG" id="cal:CAALFM_C109750WA"/>
<dbReference type="CGD" id="CAL0000174567">
    <property type="gene designation" value="orf19.12302"/>
</dbReference>
<dbReference type="VEuPathDB" id="FungiDB:C1_09750W_A"/>
<dbReference type="eggNOG" id="ENOG502QW0H">
    <property type="taxonomic scope" value="Eukaryota"/>
</dbReference>
<dbReference type="HOGENOM" id="CLU_066477_0_0_1"/>
<dbReference type="InParanoid" id="P0CB63"/>
<dbReference type="OMA" id="QYWDVLS"/>
<dbReference type="OrthoDB" id="4097053at2759"/>
<dbReference type="PRO" id="PR:P0CB63"/>
<dbReference type="Proteomes" id="UP000000559">
    <property type="component" value="Chromosome 1"/>
</dbReference>
<dbReference type="GO" id="GO:0005789">
    <property type="term" value="C:endoplasmic reticulum membrane"/>
    <property type="evidence" value="ECO:0007669"/>
    <property type="project" value="UniProtKB-SubCell"/>
</dbReference>
<dbReference type="GO" id="GO:0043529">
    <property type="term" value="C:GET complex"/>
    <property type="evidence" value="ECO:0007669"/>
    <property type="project" value="UniProtKB-UniRule"/>
</dbReference>
<dbReference type="GO" id="GO:0000139">
    <property type="term" value="C:Golgi membrane"/>
    <property type="evidence" value="ECO:0007669"/>
    <property type="project" value="UniProtKB-SubCell"/>
</dbReference>
<dbReference type="GO" id="GO:0045048">
    <property type="term" value="P:protein insertion into ER membrane"/>
    <property type="evidence" value="ECO:0007669"/>
    <property type="project" value="UniProtKB-UniRule"/>
</dbReference>
<dbReference type="GO" id="GO:0006890">
    <property type="term" value="P:retrograde vesicle-mediated transport, Golgi to endoplasmic reticulum"/>
    <property type="evidence" value="ECO:0000318"/>
    <property type="project" value="GO_Central"/>
</dbReference>
<dbReference type="HAMAP" id="MF_03114">
    <property type="entry name" value="Get2"/>
    <property type="match status" value="1"/>
</dbReference>
<dbReference type="InterPro" id="IPR014802">
    <property type="entry name" value="GET2"/>
</dbReference>
<dbReference type="InterPro" id="IPR028143">
    <property type="entry name" value="Get2/sif1"/>
</dbReference>
<dbReference type="PANTHER" id="PTHR28263">
    <property type="entry name" value="GOLGI TO ER TRAFFIC PROTEIN 2"/>
    <property type="match status" value="1"/>
</dbReference>
<dbReference type="PANTHER" id="PTHR28263:SF1">
    <property type="entry name" value="GOLGI TO ER TRAFFIC PROTEIN 2"/>
    <property type="match status" value="1"/>
</dbReference>
<dbReference type="Pfam" id="PF08690">
    <property type="entry name" value="GET2"/>
    <property type="match status" value="1"/>
</dbReference>
<comment type="function">
    <text evidence="1">Required for the post-translational delivery of tail-anchored (TA) proteins to the endoplasmic reticulum. Together with GET1, acts as a membrane receptor for soluble GET3, which recognizes and selectively binds the transmembrane domain of TA proteins in the cytosol. The GET complex cooperates with the HDEL receptor ERD2 to mediate the ATP-dependent retrieval of resident ER proteins that contain a C-terminal H-D-E-L retention signal from the Golgi to the ER.</text>
</comment>
<comment type="subunit">
    <text evidence="1">Component of the Golgi to ER traffic (GET) complex, which is composed of GET1, GET2 and GET3. Within the complex, GET1 and GET2 form a heterotetramer which is stabilized by phosphatidylinositol binding and which binds to the GET3 homodimer.</text>
</comment>
<comment type="subcellular location">
    <subcellularLocation>
        <location evidence="1">Endoplasmic reticulum membrane</location>
        <topology evidence="1">Multi-pass membrane protein</topology>
    </subcellularLocation>
    <subcellularLocation>
        <location evidence="1">Golgi apparatus membrane</location>
        <topology evidence="1">Multi-pass membrane protein</topology>
    </subcellularLocation>
</comment>
<comment type="similarity">
    <text evidence="1">Belongs to the GET2 family.</text>
</comment>
<gene>
    <name evidence="1" type="primary">GET2</name>
    <name type="ordered locus">CAALFM_C109750WA</name>
    <name type="ORF">CaO19.12302</name>
    <name type="ORF">CaO19.4839</name>
</gene>
<feature type="chain" id="PRO_0000388626" description="Golgi to ER traffic protein 2">
    <location>
        <begin position="1"/>
        <end position="298"/>
    </location>
</feature>
<feature type="topological domain" description="Cytoplasmic" evidence="1">
    <location>
        <begin position="1"/>
        <end position="164"/>
    </location>
</feature>
<feature type="transmembrane region" description="Helical" evidence="1">
    <location>
        <begin position="165"/>
        <end position="185"/>
    </location>
</feature>
<feature type="topological domain" description="Lumenal" evidence="1">
    <location>
        <begin position="186"/>
        <end position="211"/>
    </location>
</feature>
<feature type="transmembrane region" description="Helical" evidence="1">
    <location>
        <begin position="212"/>
        <end position="231"/>
    </location>
</feature>
<feature type="topological domain" description="Cytoplasmic" evidence="1">
    <location>
        <begin position="232"/>
        <end position="275"/>
    </location>
</feature>
<feature type="transmembrane region" description="Helical" evidence="1">
    <location>
        <begin position="276"/>
        <end position="296"/>
    </location>
</feature>
<feature type="topological domain" description="Lumenal" evidence="1">
    <location>
        <begin position="297"/>
        <end position="298"/>
    </location>
</feature>
<feature type="region of interest" description="Disordered" evidence="2">
    <location>
        <begin position="40"/>
        <end position="92"/>
    </location>
</feature>
<feature type="compositionally biased region" description="Low complexity" evidence="2">
    <location>
        <begin position="42"/>
        <end position="55"/>
    </location>
</feature>
<feature type="compositionally biased region" description="Basic and acidic residues" evidence="2">
    <location>
        <begin position="56"/>
        <end position="67"/>
    </location>
</feature>
<protein>
    <recommendedName>
        <fullName evidence="1">Golgi to ER traffic protein 2</fullName>
    </recommendedName>
</protein>
<reference key="1">
    <citation type="journal article" date="2004" name="Proc. Natl. Acad. Sci. U.S.A.">
        <title>The diploid genome sequence of Candida albicans.</title>
        <authorList>
            <person name="Jones T."/>
            <person name="Federspiel N.A."/>
            <person name="Chibana H."/>
            <person name="Dungan J."/>
            <person name="Kalman S."/>
            <person name="Magee B.B."/>
            <person name="Newport G."/>
            <person name="Thorstenson Y.R."/>
            <person name="Agabian N."/>
            <person name="Magee P.T."/>
            <person name="Davis R.W."/>
            <person name="Scherer S."/>
        </authorList>
    </citation>
    <scope>NUCLEOTIDE SEQUENCE [LARGE SCALE GENOMIC DNA]</scope>
    <source>
        <strain>SC5314 / ATCC MYA-2876</strain>
    </source>
</reference>
<reference key="2">
    <citation type="journal article" date="2007" name="Genome Biol.">
        <title>Assembly of the Candida albicans genome into sixteen supercontigs aligned on the eight chromosomes.</title>
        <authorList>
            <person name="van het Hoog M."/>
            <person name="Rast T.J."/>
            <person name="Martchenko M."/>
            <person name="Grindle S."/>
            <person name="Dignard D."/>
            <person name="Hogues H."/>
            <person name="Cuomo C."/>
            <person name="Berriman M."/>
            <person name="Scherer S."/>
            <person name="Magee B.B."/>
            <person name="Whiteway M."/>
            <person name="Chibana H."/>
            <person name="Nantel A."/>
            <person name="Magee P.T."/>
        </authorList>
    </citation>
    <scope>GENOME REANNOTATION</scope>
    <source>
        <strain>SC5314 / ATCC MYA-2876</strain>
    </source>
</reference>
<reference key="3">
    <citation type="journal article" date="2013" name="Genome Biol.">
        <title>Assembly of a phased diploid Candida albicans genome facilitates allele-specific measurements and provides a simple model for repeat and indel structure.</title>
        <authorList>
            <person name="Muzzey D."/>
            <person name="Schwartz K."/>
            <person name="Weissman J.S."/>
            <person name="Sherlock G."/>
        </authorList>
    </citation>
    <scope>NUCLEOTIDE SEQUENCE [LARGE SCALE GENOMIC DNA]</scope>
    <scope>GENOME REANNOTATION</scope>
    <source>
        <strain>SC5314 / ATCC MYA-2876</strain>
    </source>
</reference>
<evidence type="ECO:0000255" key="1">
    <source>
        <dbReference type="HAMAP-Rule" id="MF_03114"/>
    </source>
</evidence>
<evidence type="ECO:0000256" key="2">
    <source>
        <dbReference type="SAM" id="MobiDB-lite"/>
    </source>
</evidence>
<organism>
    <name type="scientific">Candida albicans (strain SC5314 / ATCC MYA-2876)</name>
    <name type="common">Yeast</name>
    <dbReference type="NCBI Taxonomy" id="237561"/>
    <lineage>
        <taxon>Eukaryota</taxon>
        <taxon>Fungi</taxon>
        <taxon>Dikarya</taxon>
        <taxon>Ascomycota</taxon>
        <taxon>Saccharomycotina</taxon>
        <taxon>Pichiomycetes</taxon>
        <taxon>Debaryomycetaceae</taxon>
        <taxon>Candida/Lodderomyces clade</taxon>
        <taxon>Candida</taxon>
    </lineage>
</organism>